<evidence type="ECO:0000255" key="1">
    <source>
        <dbReference type="HAMAP-Rule" id="MF_01043"/>
    </source>
</evidence>
<name>PLSY_RUBXD</name>
<gene>
    <name evidence="1" type="primary">plsY</name>
    <name type="ordered locus">Rxyl_2113</name>
</gene>
<comment type="function">
    <text evidence="1">Catalyzes the transfer of an acyl group from acyl-phosphate (acyl-PO(4)) to glycerol-3-phosphate (G3P) to form lysophosphatidic acid (LPA). This enzyme utilizes acyl-phosphate as fatty acyl donor, but not acyl-CoA or acyl-ACP.</text>
</comment>
<comment type="catalytic activity">
    <reaction evidence="1">
        <text>an acyl phosphate + sn-glycerol 3-phosphate = a 1-acyl-sn-glycero-3-phosphate + phosphate</text>
        <dbReference type="Rhea" id="RHEA:34075"/>
        <dbReference type="ChEBI" id="CHEBI:43474"/>
        <dbReference type="ChEBI" id="CHEBI:57597"/>
        <dbReference type="ChEBI" id="CHEBI:57970"/>
        <dbReference type="ChEBI" id="CHEBI:59918"/>
        <dbReference type="EC" id="2.3.1.275"/>
    </reaction>
</comment>
<comment type="pathway">
    <text evidence="1">Lipid metabolism; phospholipid metabolism.</text>
</comment>
<comment type="subunit">
    <text evidence="1">Probably interacts with PlsX.</text>
</comment>
<comment type="subcellular location">
    <subcellularLocation>
        <location evidence="1">Cell membrane</location>
        <topology evidence="1">Multi-pass membrane protein</topology>
    </subcellularLocation>
</comment>
<comment type="similarity">
    <text evidence="1">Belongs to the PlsY family.</text>
</comment>
<accession>Q1AU71</accession>
<protein>
    <recommendedName>
        <fullName evidence="1">Glycerol-3-phosphate acyltransferase</fullName>
    </recommendedName>
    <alternativeName>
        <fullName evidence="1">Acyl-PO4 G3P acyltransferase</fullName>
    </alternativeName>
    <alternativeName>
        <fullName evidence="1">Acyl-phosphate--glycerol-3-phosphate acyltransferase</fullName>
    </alternativeName>
    <alternativeName>
        <fullName evidence="1">G3P acyltransferase</fullName>
        <shortName evidence="1">GPAT</shortName>
        <ecNumber evidence="1">2.3.1.275</ecNumber>
    </alternativeName>
    <alternativeName>
        <fullName evidence="1">Lysophosphatidic acid synthase</fullName>
        <shortName evidence="1">LPA synthase</shortName>
    </alternativeName>
</protein>
<proteinExistence type="inferred from homology"/>
<keyword id="KW-1003">Cell membrane</keyword>
<keyword id="KW-0444">Lipid biosynthesis</keyword>
<keyword id="KW-0443">Lipid metabolism</keyword>
<keyword id="KW-0472">Membrane</keyword>
<keyword id="KW-0594">Phospholipid biosynthesis</keyword>
<keyword id="KW-1208">Phospholipid metabolism</keyword>
<keyword id="KW-1185">Reference proteome</keyword>
<keyword id="KW-0808">Transferase</keyword>
<keyword id="KW-0812">Transmembrane</keyword>
<keyword id="KW-1133">Transmembrane helix</keyword>
<reference key="1">
    <citation type="submission" date="2006-06" db="EMBL/GenBank/DDBJ databases">
        <title>Complete sequence of Rubrobacter xylanophilus DSM 9941.</title>
        <authorList>
            <consortium name="US DOE Joint Genome Institute"/>
            <person name="Copeland A."/>
            <person name="Lucas S."/>
            <person name="Lapidus A."/>
            <person name="Barry K."/>
            <person name="Detter J.C."/>
            <person name="Glavina del Rio T."/>
            <person name="Hammon N."/>
            <person name="Israni S."/>
            <person name="Dalin E."/>
            <person name="Tice H."/>
            <person name="Pitluck S."/>
            <person name="Munk A.C."/>
            <person name="Brettin T."/>
            <person name="Bruce D."/>
            <person name="Han C."/>
            <person name="Tapia R."/>
            <person name="Gilna P."/>
            <person name="Schmutz J."/>
            <person name="Larimer F."/>
            <person name="Land M."/>
            <person name="Hauser L."/>
            <person name="Kyrpides N."/>
            <person name="Lykidis A."/>
            <person name="da Costa M.S."/>
            <person name="Rainey F.A."/>
            <person name="Empadinhas N."/>
            <person name="Jolivet E."/>
            <person name="Battista J.R."/>
            <person name="Richardson P."/>
        </authorList>
    </citation>
    <scope>NUCLEOTIDE SEQUENCE [LARGE SCALE GENOMIC DNA]</scope>
    <source>
        <strain>DSM 9941 / JCM 11954 / NBRC 16129 / PRD-1</strain>
    </source>
</reference>
<dbReference type="EC" id="2.3.1.275" evidence="1"/>
<dbReference type="EMBL" id="CP000386">
    <property type="protein sequence ID" value="ABG05057.1"/>
    <property type="molecule type" value="Genomic_DNA"/>
</dbReference>
<dbReference type="RefSeq" id="WP_011565072.1">
    <property type="nucleotide sequence ID" value="NC_008148.1"/>
</dbReference>
<dbReference type="SMR" id="Q1AU71"/>
<dbReference type="STRING" id="266117.Rxyl_2113"/>
<dbReference type="KEGG" id="rxy:Rxyl_2113"/>
<dbReference type="eggNOG" id="COG0344">
    <property type="taxonomic scope" value="Bacteria"/>
</dbReference>
<dbReference type="HOGENOM" id="CLU_081254_0_0_11"/>
<dbReference type="OrthoDB" id="9777124at2"/>
<dbReference type="PhylomeDB" id="Q1AU71"/>
<dbReference type="UniPathway" id="UPA00085"/>
<dbReference type="Proteomes" id="UP000006637">
    <property type="component" value="Chromosome"/>
</dbReference>
<dbReference type="GO" id="GO:0005886">
    <property type="term" value="C:plasma membrane"/>
    <property type="evidence" value="ECO:0007669"/>
    <property type="project" value="UniProtKB-SubCell"/>
</dbReference>
<dbReference type="GO" id="GO:0043772">
    <property type="term" value="F:acyl-phosphate glycerol-3-phosphate acyltransferase activity"/>
    <property type="evidence" value="ECO:0007669"/>
    <property type="project" value="UniProtKB-UniRule"/>
</dbReference>
<dbReference type="GO" id="GO:0008654">
    <property type="term" value="P:phospholipid biosynthetic process"/>
    <property type="evidence" value="ECO:0007669"/>
    <property type="project" value="UniProtKB-UniRule"/>
</dbReference>
<dbReference type="HAMAP" id="MF_01043">
    <property type="entry name" value="PlsY"/>
    <property type="match status" value="1"/>
</dbReference>
<dbReference type="InterPro" id="IPR003811">
    <property type="entry name" value="G3P_acylTferase_PlsY"/>
</dbReference>
<dbReference type="NCBIfam" id="TIGR00023">
    <property type="entry name" value="glycerol-3-phosphate 1-O-acyltransferase PlsY"/>
    <property type="match status" value="1"/>
</dbReference>
<dbReference type="PANTHER" id="PTHR30309:SF0">
    <property type="entry name" value="GLYCEROL-3-PHOSPHATE ACYLTRANSFERASE-RELATED"/>
    <property type="match status" value="1"/>
</dbReference>
<dbReference type="PANTHER" id="PTHR30309">
    <property type="entry name" value="INNER MEMBRANE PROTEIN YGIH"/>
    <property type="match status" value="1"/>
</dbReference>
<dbReference type="Pfam" id="PF02660">
    <property type="entry name" value="G3P_acyltransf"/>
    <property type="match status" value="1"/>
</dbReference>
<dbReference type="SMART" id="SM01207">
    <property type="entry name" value="G3P_acyltransf"/>
    <property type="match status" value="1"/>
</dbReference>
<sequence>MLEVLLVLLGYVLGSVPTGILVGRAYGVDVRKVGSGNIGTANVMRAAGKGAAALTMLGDMLKGVAPVLLARALGAGPWVLAAVALAAVVGHCWPVFLRFRGGKGVATGAGTSIALAPPVGLGMFALWWVVALASRYTSLAAMVVTVVSPFAFLLSGQPLPYVLYTVVGGAAVLWRHRENARALLRGTERKFGGRSGGGG</sequence>
<organism>
    <name type="scientific">Rubrobacter xylanophilus (strain DSM 9941 / JCM 11954 / NBRC 16129 / PRD-1)</name>
    <dbReference type="NCBI Taxonomy" id="266117"/>
    <lineage>
        <taxon>Bacteria</taxon>
        <taxon>Bacillati</taxon>
        <taxon>Actinomycetota</taxon>
        <taxon>Rubrobacteria</taxon>
        <taxon>Rubrobacterales</taxon>
        <taxon>Rubrobacteraceae</taxon>
        <taxon>Rubrobacter</taxon>
    </lineage>
</organism>
<feature type="chain" id="PRO_1000064217" description="Glycerol-3-phosphate acyltransferase">
    <location>
        <begin position="1"/>
        <end position="199"/>
    </location>
</feature>
<feature type="transmembrane region" description="Helical" evidence="1">
    <location>
        <begin position="2"/>
        <end position="22"/>
    </location>
</feature>
<feature type="transmembrane region" description="Helical" evidence="1">
    <location>
        <begin position="77"/>
        <end position="97"/>
    </location>
</feature>
<feature type="transmembrane region" description="Helical" evidence="1">
    <location>
        <begin position="113"/>
        <end position="133"/>
    </location>
</feature>
<feature type="transmembrane region" description="Helical" evidence="1">
    <location>
        <begin position="139"/>
        <end position="159"/>
    </location>
</feature>